<reference key="1">
    <citation type="submission" date="2006-01" db="EMBL/GenBank/DDBJ databases">
        <title>Complete sequence of Rhodopseudomonas palustris HaA2.</title>
        <authorList>
            <consortium name="US DOE Joint Genome Institute"/>
            <person name="Copeland A."/>
            <person name="Lucas S."/>
            <person name="Lapidus A."/>
            <person name="Barry K."/>
            <person name="Detter J.C."/>
            <person name="Glavina T."/>
            <person name="Hammon N."/>
            <person name="Israni S."/>
            <person name="Pitluck S."/>
            <person name="Chain P."/>
            <person name="Malfatti S."/>
            <person name="Shin M."/>
            <person name="Vergez L."/>
            <person name="Schmutz J."/>
            <person name="Larimer F."/>
            <person name="Land M."/>
            <person name="Hauser L."/>
            <person name="Pelletier D.A."/>
            <person name="Kyrpides N."/>
            <person name="Anderson I."/>
            <person name="Oda Y."/>
            <person name="Harwood C.S."/>
            <person name="Richardson P."/>
        </authorList>
    </citation>
    <scope>NUCLEOTIDE SEQUENCE [LARGE SCALE GENOMIC DNA]</scope>
    <source>
        <strain>HaA2</strain>
    </source>
</reference>
<protein>
    <recommendedName>
        <fullName evidence="1">ATP synthase subunit beta</fullName>
        <ecNumber evidence="1">7.1.2.2</ecNumber>
    </recommendedName>
    <alternativeName>
        <fullName evidence="1">ATP synthase F1 sector subunit beta</fullName>
    </alternativeName>
    <alternativeName>
        <fullName evidence="1">F-ATPase subunit beta</fullName>
    </alternativeName>
</protein>
<gene>
    <name evidence="1" type="primary">atpD</name>
    <name type="ordered locus">RPB_0265</name>
</gene>
<keyword id="KW-0066">ATP synthesis</keyword>
<keyword id="KW-0067">ATP-binding</keyword>
<keyword id="KW-0997">Cell inner membrane</keyword>
<keyword id="KW-1003">Cell membrane</keyword>
<keyword id="KW-0139">CF(1)</keyword>
<keyword id="KW-0375">Hydrogen ion transport</keyword>
<keyword id="KW-0406">Ion transport</keyword>
<keyword id="KW-0472">Membrane</keyword>
<keyword id="KW-0547">Nucleotide-binding</keyword>
<keyword id="KW-1185">Reference proteome</keyword>
<keyword id="KW-1278">Translocase</keyword>
<keyword id="KW-0813">Transport</keyword>
<feature type="chain" id="PRO_0000254360" description="ATP synthase subunit beta">
    <location>
        <begin position="1"/>
        <end position="476"/>
    </location>
</feature>
<feature type="binding site" evidence="1">
    <location>
        <begin position="154"/>
        <end position="161"/>
    </location>
    <ligand>
        <name>ATP</name>
        <dbReference type="ChEBI" id="CHEBI:30616"/>
    </ligand>
</feature>
<proteinExistence type="inferred from homology"/>
<name>ATPB_RHOP2</name>
<accession>Q2J3I4</accession>
<dbReference type="EC" id="7.1.2.2" evidence="1"/>
<dbReference type="EMBL" id="CP000250">
    <property type="protein sequence ID" value="ABD04976.1"/>
    <property type="molecule type" value="Genomic_DNA"/>
</dbReference>
<dbReference type="RefSeq" id="WP_011439166.1">
    <property type="nucleotide sequence ID" value="NC_007778.1"/>
</dbReference>
<dbReference type="SMR" id="Q2J3I4"/>
<dbReference type="STRING" id="316058.RPB_0265"/>
<dbReference type="KEGG" id="rpb:RPB_0265"/>
<dbReference type="eggNOG" id="COG0055">
    <property type="taxonomic scope" value="Bacteria"/>
</dbReference>
<dbReference type="HOGENOM" id="CLU_022398_0_2_5"/>
<dbReference type="OrthoDB" id="9801639at2"/>
<dbReference type="Proteomes" id="UP000008809">
    <property type="component" value="Chromosome"/>
</dbReference>
<dbReference type="GO" id="GO:0005886">
    <property type="term" value="C:plasma membrane"/>
    <property type="evidence" value="ECO:0007669"/>
    <property type="project" value="UniProtKB-SubCell"/>
</dbReference>
<dbReference type="GO" id="GO:0045259">
    <property type="term" value="C:proton-transporting ATP synthase complex"/>
    <property type="evidence" value="ECO:0007669"/>
    <property type="project" value="UniProtKB-KW"/>
</dbReference>
<dbReference type="GO" id="GO:0005524">
    <property type="term" value="F:ATP binding"/>
    <property type="evidence" value="ECO:0007669"/>
    <property type="project" value="UniProtKB-UniRule"/>
</dbReference>
<dbReference type="GO" id="GO:0016887">
    <property type="term" value="F:ATP hydrolysis activity"/>
    <property type="evidence" value="ECO:0007669"/>
    <property type="project" value="InterPro"/>
</dbReference>
<dbReference type="GO" id="GO:0046933">
    <property type="term" value="F:proton-transporting ATP synthase activity, rotational mechanism"/>
    <property type="evidence" value="ECO:0007669"/>
    <property type="project" value="UniProtKB-UniRule"/>
</dbReference>
<dbReference type="CDD" id="cd18110">
    <property type="entry name" value="ATP-synt_F1_beta_C"/>
    <property type="match status" value="1"/>
</dbReference>
<dbReference type="CDD" id="cd18115">
    <property type="entry name" value="ATP-synt_F1_beta_N"/>
    <property type="match status" value="1"/>
</dbReference>
<dbReference type="CDD" id="cd01133">
    <property type="entry name" value="F1-ATPase_beta_CD"/>
    <property type="match status" value="1"/>
</dbReference>
<dbReference type="FunFam" id="1.10.1140.10:FF:000001">
    <property type="entry name" value="ATP synthase subunit beta"/>
    <property type="match status" value="1"/>
</dbReference>
<dbReference type="FunFam" id="2.40.10.170:FF:000004">
    <property type="entry name" value="ATP synthase subunit beta"/>
    <property type="match status" value="1"/>
</dbReference>
<dbReference type="FunFam" id="3.40.50.300:FF:000026">
    <property type="entry name" value="ATP synthase subunit beta"/>
    <property type="match status" value="1"/>
</dbReference>
<dbReference type="Gene3D" id="2.40.10.170">
    <property type="match status" value="1"/>
</dbReference>
<dbReference type="Gene3D" id="1.10.1140.10">
    <property type="entry name" value="Bovine Mitochondrial F1-atpase, Atp Synthase Beta Chain, Chain D, domain 3"/>
    <property type="match status" value="1"/>
</dbReference>
<dbReference type="Gene3D" id="3.40.50.300">
    <property type="entry name" value="P-loop containing nucleotide triphosphate hydrolases"/>
    <property type="match status" value="1"/>
</dbReference>
<dbReference type="HAMAP" id="MF_01347">
    <property type="entry name" value="ATP_synth_beta_bact"/>
    <property type="match status" value="1"/>
</dbReference>
<dbReference type="InterPro" id="IPR003593">
    <property type="entry name" value="AAA+_ATPase"/>
</dbReference>
<dbReference type="InterPro" id="IPR055190">
    <property type="entry name" value="ATP-synt_VA_C"/>
</dbReference>
<dbReference type="InterPro" id="IPR005722">
    <property type="entry name" value="ATP_synth_F1_bsu"/>
</dbReference>
<dbReference type="InterPro" id="IPR020003">
    <property type="entry name" value="ATPase_a/bsu_AS"/>
</dbReference>
<dbReference type="InterPro" id="IPR050053">
    <property type="entry name" value="ATPase_alpha/beta_chains"/>
</dbReference>
<dbReference type="InterPro" id="IPR004100">
    <property type="entry name" value="ATPase_F1/V1/A1_a/bsu_N"/>
</dbReference>
<dbReference type="InterPro" id="IPR036121">
    <property type="entry name" value="ATPase_F1/V1/A1_a/bsu_N_sf"/>
</dbReference>
<dbReference type="InterPro" id="IPR000194">
    <property type="entry name" value="ATPase_F1/V1/A1_a/bsu_nucl-bd"/>
</dbReference>
<dbReference type="InterPro" id="IPR024034">
    <property type="entry name" value="ATPase_F1/V1_b/a_C"/>
</dbReference>
<dbReference type="InterPro" id="IPR027417">
    <property type="entry name" value="P-loop_NTPase"/>
</dbReference>
<dbReference type="NCBIfam" id="TIGR01039">
    <property type="entry name" value="atpD"/>
    <property type="match status" value="1"/>
</dbReference>
<dbReference type="PANTHER" id="PTHR15184">
    <property type="entry name" value="ATP SYNTHASE"/>
    <property type="match status" value="1"/>
</dbReference>
<dbReference type="PANTHER" id="PTHR15184:SF71">
    <property type="entry name" value="ATP SYNTHASE SUBUNIT BETA, MITOCHONDRIAL"/>
    <property type="match status" value="1"/>
</dbReference>
<dbReference type="Pfam" id="PF00006">
    <property type="entry name" value="ATP-synt_ab"/>
    <property type="match status" value="1"/>
</dbReference>
<dbReference type="Pfam" id="PF02874">
    <property type="entry name" value="ATP-synt_ab_N"/>
    <property type="match status" value="1"/>
</dbReference>
<dbReference type="Pfam" id="PF22919">
    <property type="entry name" value="ATP-synt_VA_C"/>
    <property type="match status" value="1"/>
</dbReference>
<dbReference type="PIRSF" id="PIRSF039072">
    <property type="entry name" value="ATPase_subunit_beta"/>
    <property type="match status" value="1"/>
</dbReference>
<dbReference type="SMART" id="SM00382">
    <property type="entry name" value="AAA"/>
    <property type="match status" value="1"/>
</dbReference>
<dbReference type="SUPFAM" id="SSF47917">
    <property type="entry name" value="C-terminal domain of alpha and beta subunits of F1 ATP synthase"/>
    <property type="match status" value="1"/>
</dbReference>
<dbReference type="SUPFAM" id="SSF50615">
    <property type="entry name" value="N-terminal domain of alpha and beta subunits of F1 ATP synthase"/>
    <property type="match status" value="1"/>
</dbReference>
<dbReference type="SUPFAM" id="SSF52540">
    <property type="entry name" value="P-loop containing nucleoside triphosphate hydrolases"/>
    <property type="match status" value="1"/>
</dbReference>
<dbReference type="PROSITE" id="PS00152">
    <property type="entry name" value="ATPASE_ALPHA_BETA"/>
    <property type="match status" value="1"/>
</dbReference>
<comment type="function">
    <text evidence="1">Produces ATP from ADP in the presence of a proton gradient across the membrane. The catalytic sites are hosted primarily by the beta subunits.</text>
</comment>
<comment type="catalytic activity">
    <reaction evidence="1">
        <text>ATP + H2O + 4 H(+)(in) = ADP + phosphate + 5 H(+)(out)</text>
        <dbReference type="Rhea" id="RHEA:57720"/>
        <dbReference type="ChEBI" id="CHEBI:15377"/>
        <dbReference type="ChEBI" id="CHEBI:15378"/>
        <dbReference type="ChEBI" id="CHEBI:30616"/>
        <dbReference type="ChEBI" id="CHEBI:43474"/>
        <dbReference type="ChEBI" id="CHEBI:456216"/>
        <dbReference type="EC" id="7.1.2.2"/>
    </reaction>
</comment>
<comment type="subunit">
    <text evidence="1">F-type ATPases have 2 components, CF(1) - the catalytic core - and CF(0) - the membrane proton channel. CF(1) has five subunits: alpha(3), beta(3), gamma(1), delta(1), epsilon(1). CF(0) has four main subunits: a(1), b(1), b'(1) and c(9-12).</text>
</comment>
<comment type="subcellular location">
    <subcellularLocation>
        <location evidence="1">Cell inner membrane</location>
        <topology evidence="1">Peripheral membrane protein</topology>
    </subcellularLocation>
</comment>
<comment type="similarity">
    <text evidence="1">Belongs to the ATPase alpha/beta chains family.</text>
</comment>
<evidence type="ECO:0000255" key="1">
    <source>
        <dbReference type="HAMAP-Rule" id="MF_01347"/>
    </source>
</evidence>
<sequence>MATPANQTGRITQVIGAVVDVQFEGHLPAILNAIETKNGDNRLVLEVAQHLGESTVRTIAMDTTEGLVRGQEVTDTGNPIMVPVGVGTLGRIMNVIGEPVDEQGPVANEGLRPIHAEAPTYTDQSTEAEILVTGIKVVDLLAPYAKGGKIGLFGGAGVGKTVLIQELINNVAKAHGGYSVFAGVGERTREGNDLYHEFIESGVNKKGGGEGSKCALVYGQMNEPPGARARVALSGLTVAEHFRDQGQDVLFFVDNIFRFTQAGSEVSALLGRIPSAVGYQPTLATDMGALQERITTTHKGSITSVQAIYVPADDLTDPAPATSFAHLDATTVLNRAISEKGIYPAVDPLDSTSRMLSPLIVGEEHYQTARMVQQVLQKYKSLQDIIAILGMDELSEEDKLAVARARKIERFLSQPFFVAEIFTGSPGKFVDLADTIKGFRAICEGKYDHLPEAAFYMVGAIEEAVEKGKKLAAEAA</sequence>
<organism>
    <name type="scientific">Rhodopseudomonas palustris (strain HaA2)</name>
    <dbReference type="NCBI Taxonomy" id="316058"/>
    <lineage>
        <taxon>Bacteria</taxon>
        <taxon>Pseudomonadati</taxon>
        <taxon>Pseudomonadota</taxon>
        <taxon>Alphaproteobacteria</taxon>
        <taxon>Hyphomicrobiales</taxon>
        <taxon>Nitrobacteraceae</taxon>
        <taxon>Rhodopseudomonas</taxon>
    </lineage>
</organism>